<name>LAC2_MOUSE</name>
<keyword id="KW-0002">3D-structure</keyword>
<keyword id="KW-0903">Direct protein sequencing</keyword>
<keyword id="KW-1015">Disulfide bond</keyword>
<keyword id="KW-0393">Immunoglobulin domain</keyword>
<keyword id="KW-1185">Reference proteome</keyword>
<reference key="1">
    <citation type="journal article" date="1982" name="Proc. Natl. Acad. Sci. U.S.A.">
        <title>Evolution of mouse immunoglobulin lambda genes.</title>
        <authorList>
            <person name="Selsing E."/>
            <person name="Miller J."/>
            <person name="Wilson R."/>
            <person name="Storb U."/>
        </authorList>
    </citation>
    <scope>NUCLEOTIDE SEQUENCE [GENOMIC DNA]</scope>
</reference>
<reference key="2">
    <citation type="journal article" date="1982" name="Nucleic Acids Res.">
        <title>Nucleotide sequence of a chromosomal rearranged lambda 2 immunoglobulin gene of mouse.</title>
        <authorList>
            <person name="Wu G.E."/>
            <person name="Govindji N."/>
            <person name="Hozumi N."/>
            <person name="Murialdo H."/>
        </authorList>
    </citation>
    <scope>NUCLEOTIDE SEQUENCE [GENOMIC DNA]</scope>
</reference>
<reference key="3">
    <citation type="journal article" date="1982" name="Nature">
        <title>Somatic variants of murine immunoglobulin lambda light chains.</title>
        <authorList>
            <person name="Bothwell A.L.M."/>
            <person name="Paskind M."/>
            <person name="Reth M."/>
            <person name="Imanishi-Kari T."/>
            <person name="Rajewsky K."/>
            <person name="Baltimore D."/>
        </authorList>
    </citation>
    <scope>NUCLEOTIDE SEQUENCE [GENOMIC DNA] (MOPC 315)</scope>
</reference>
<reference key="4">
    <citation type="journal article" date="1973" name="Biochemistry">
        <title>Amino acid sequence of the light chain of a mouse myeloma protein (MOPC-315).</title>
        <authorList>
            <person name="Dugan E.S."/>
            <person name="Bradshaw R.A."/>
            <person name="Simms E.S."/>
            <person name="Eisen H.N."/>
        </authorList>
    </citation>
    <scope>PROTEIN SEQUENCE (MOPC 315)</scope>
</reference>
<reference key="5">
    <citation type="journal article" date="1981" name="Proc. Natl. Acad. Sci. U.S.A.">
        <title>Identification of a third type of lambda light chain in mouse immunoglobulins.</title>
        <authorList>
            <person name="Azuma T."/>
            <person name="Steiner L.A."/>
            <person name="Eisen H.N."/>
        </authorList>
    </citation>
    <scope>PROTEIN SEQUENCE OF 66-104 (MOPC 315)</scope>
    <scope>SEQUENCE REVISION</scope>
</reference>
<accession>P01844</accession>
<dbReference type="EMBL" id="J00595">
    <property type="protein sequence ID" value="AAA39151.1"/>
    <property type="molecule type" value="Genomic_DNA"/>
</dbReference>
<dbReference type="PIR" id="C93922">
    <property type="entry name" value="L2MS"/>
</dbReference>
<dbReference type="PDB" id="2QHR">
    <property type="method" value="X-ray"/>
    <property type="resolution" value="2.00 A"/>
    <property type="chains" value="L=1-102"/>
</dbReference>
<dbReference type="PDBsum" id="2QHR"/>
<dbReference type="SMR" id="P01844"/>
<dbReference type="FunCoup" id="P01844">
    <property type="interactions" value="44"/>
</dbReference>
<dbReference type="STRING" id="10090.ENSMUSP00000100464"/>
<dbReference type="PaxDb" id="10090-ENSMUSP00000100464"/>
<dbReference type="PeptideAtlas" id="P01844"/>
<dbReference type="ProteomicsDB" id="264905"/>
<dbReference type="Ensembl" id="ENSMUST00000103749.3">
    <property type="protein sequence ID" value="ENSMUSP00000100464.3"/>
    <property type="gene ID" value="ENSMUSG00000076937.4"/>
</dbReference>
<dbReference type="AGR" id="MGI:99547"/>
<dbReference type="MGI" id="MGI:99547">
    <property type="gene designation" value="Iglc2"/>
</dbReference>
<dbReference type="VEuPathDB" id="HostDB:ENSMUSG00000076937"/>
<dbReference type="eggNOG" id="ENOG502TFGA">
    <property type="taxonomic scope" value="Eukaryota"/>
</dbReference>
<dbReference type="GeneTree" id="ENSGT00940000153307"/>
<dbReference type="InParanoid" id="P01844"/>
<dbReference type="OMA" id="WKGNDVT"/>
<dbReference type="PhylomeDB" id="P01844"/>
<dbReference type="Reactome" id="R-MMU-166663">
    <property type="pathway name" value="Initial triggering of complement"/>
</dbReference>
<dbReference type="Reactome" id="R-MMU-173623">
    <property type="pathway name" value="Classical antibody-mediated complement activation"/>
</dbReference>
<dbReference type="Reactome" id="R-MMU-198933">
    <property type="pathway name" value="Immunoregulatory interactions between a Lymphoid and a non-Lymphoid cell"/>
</dbReference>
<dbReference type="Reactome" id="R-MMU-202733">
    <property type="pathway name" value="Cell surface interactions at the vascular wall"/>
</dbReference>
<dbReference type="Reactome" id="R-MMU-2029481">
    <property type="pathway name" value="FCGR activation"/>
</dbReference>
<dbReference type="Reactome" id="R-MMU-2029482">
    <property type="pathway name" value="Regulation of actin dynamics for phagocytic cup formation"/>
</dbReference>
<dbReference type="Reactome" id="R-MMU-2029485">
    <property type="pathway name" value="Role of phospholipids in phagocytosis"/>
</dbReference>
<dbReference type="Reactome" id="R-MMU-2168880">
    <property type="pathway name" value="Scavenging of heme from plasma"/>
</dbReference>
<dbReference type="Reactome" id="R-MMU-2454202">
    <property type="pathway name" value="Fc epsilon receptor (FCERI) signaling"/>
</dbReference>
<dbReference type="Reactome" id="R-MMU-2730905">
    <property type="pathway name" value="Role of LAT2/NTAL/LAB on calcium mobilization"/>
</dbReference>
<dbReference type="Reactome" id="R-MMU-2871796">
    <property type="pathway name" value="FCERI mediated MAPK activation"/>
</dbReference>
<dbReference type="Reactome" id="R-MMU-2871809">
    <property type="pathway name" value="FCERI mediated Ca+2 mobilization"/>
</dbReference>
<dbReference type="Reactome" id="R-MMU-2871837">
    <property type="pathway name" value="FCERI mediated NF-kB activation"/>
</dbReference>
<dbReference type="Reactome" id="R-MMU-5690714">
    <property type="pathway name" value="CD22 mediated BCR regulation"/>
</dbReference>
<dbReference type="Reactome" id="R-MMU-977606">
    <property type="pathway name" value="Regulation of Complement cascade"/>
</dbReference>
<dbReference type="Reactome" id="R-MMU-983695">
    <property type="pathway name" value="Antigen activates B Cell Receptor (BCR) leading to generation of second messengers"/>
</dbReference>
<dbReference type="EvolutionaryTrace" id="P01844"/>
<dbReference type="PRO" id="PR:P01844"/>
<dbReference type="Proteomes" id="UP000000589">
    <property type="component" value="Chromosome 16"/>
</dbReference>
<dbReference type="RNAct" id="P01844">
    <property type="molecule type" value="protein"/>
</dbReference>
<dbReference type="Bgee" id="ENSMUSG00000076937">
    <property type="expression patterns" value="Expressed in spleen and 60 other cell types or tissues"/>
</dbReference>
<dbReference type="ExpressionAtlas" id="P01844">
    <property type="expression patterns" value="baseline and differential"/>
</dbReference>
<dbReference type="GO" id="GO:0005576">
    <property type="term" value="C:extracellular region"/>
    <property type="evidence" value="ECO:0000304"/>
    <property type="project" value="Reactome"/>
</dbReference>
<dbReference type="GO" id="GO:0005886">
    <property type="term" value="C:plasma membrane"/>
    <property type="evidence" value="ECO:0000304"/>
    <property type="project" value="Reactome"/>
</dbReference>
<dbReference type="CDD" id="cd07699">
    <property type="entry name" value="IgC1_L"/>
    <property type="match status" value="1"/>
</dbReference>
<dbReference type="FunFam" id="2.60.40.10:FF:000283">
    <property type="entry name" value="Immunoglobulin kappa constant"/>
    <property type="match status" value="1"/>
</dbReference>
<dbReference type="Gene3D" id="2.60.40.10">
    <property type="entry name" value="Immunoglobulins"/>
    <property type="match status" value="1"/>
</dbReference>
<dbReference type="InterPro" id="IPR007110">
    <property type="entry name" value="Ig-like_dom"/>
</dbReference>
<dbReference type="InterPro" id="IPR036179">
    <property type="entry name" value="Ig-like_dom_sf"/>
</dbReference>
<dbReference type="InterPro" id="IPR013783">
    <property type="entry name" value="Ig-like_fold"/>
</dbReference>
<dbReference type="InterPro" id="IPR003006">
    <property type="entry name" value="Ig/MHC_CS"/>
</dbReference>
<dbReference type="InterPro" id="IPR003597">
    <property type="entry name" value="Ig_C1-set"/>
</dbReference>
<dbReference type="InterPro" id="IPR050160">
    <property type="entry name" value="MHC/Immunoglobulin"/>
</dbReference>
<dbReference type="PANTHER" id="PTHR19944:SF98">
    <property type="entry name" value="IG-LIKE DOMAIN-CONTAINING PROTEIN"/>
    <property type="match status" value="1"/>
</dbReference>
<dbReference type="PANTHER" id="PTHR19944">
    <property type="entry name" value="MHC CLASS II-RELATED"/>
    <property type="match status" value="1"/>
</dbReference>
<dbReference type="Pfam" id="PF07654">
    <property type="entry name" value="C1-set"/>
    <property type="match status" value="1"/>
</dbReference>
<dbReference type="SMART" id="SM00407">
    <property type="entry name" value="IGc1"/>
    <property type="match status" value="1"/>
</dbReference>
<dbReference type="SUPFAM" id="SSF48726">
    <property type="entry name" value="Immunoglobulin"/>
    <property type="match status" value="1"/>
</dbReference>
<dbReference type="PROSITE" id="PS50835">
    <property type="entry name" value="IG_LIKE"/>
    <property type="match status" value="1"/>
</dbReference>
<dbReference type="PROSITE" id="PS00290">
    <property type="entry name" value="IG_MHC"/>
    <property type="match status" value="1"/>
</dbReference>
<organism>
    <name type="scientific">Mus musculus</name>
    <name type="common">Mouse</name>
    <dbReference type="NCBI Taxonomy" id="10090"/>
    <lineage>
        <taxon>Eukaryota</taxon>
        <taxon>Metazoa</taxon>
        <taxon>Chordata</taxon>
        <taxon>Craniata</taxon>
        <taxon>Vertebrata</taxon>
        <taxon>Euteleostomi</taxon>
        <taxon>Mammalia</taxon>
        <taxon>Eutheria</taxon>
        <taxon>Euarchontoglires</taxon>
        <taxon>Glires</taxon>
        <taxon>Rodentia</taxon>
        <taxon>Myomorpha</taxon>
        <taxon>Muroidea</taxon>
        <taxon>Muridae</taxon>
        <taxon>Murinae</taxon>
        <taxon>Mus</taxon>
        <taxon>Mus</taxon>
    </lineage>
</organism>
<proteinExistence type="evidence at protein level"/>
<feature type="chain" id="PRO_0000153609" description="Ig lambda-2 chain C region">
    <location>
        <begin position="1" status="less than"/>
        <end position="104"/>
    </location>
</feature>
<feature type="domain" description="Ig-like">
    <location>
        <begin position="6"/>
        <end position="99"/>
    </location>
</feature>
<feature type="disulfide bond">
    <location>
        <begin position="27"/>
        <end position="85"/>
    </location>
</feature>
<feature type="disulfide bond" description="Interchain (with heavy chain)">
    <location>
        <position position="103"/>
    </location>
</feature>
<feature type="non-terminal residue">
    <location>
        <position position="1"/>
    </location>
</feature>
<feature type="strand" evidence="1">
    <location>
        <begin position="7"/>
        <end position="11"/>
    </location>
</feature>
<feature type="helix" evidence="1">
    <location>
        <begin position="15"/>
        <end position="19"/>
    </location>
</feature>
<feature type="strand" evidence="1">
    <location>
        <begin position="22"/>
        <end position="35"/>
    </location>
</feature>
<feature type="strand" evidence="1">
    <location>
        <begin position="38"/>
        <end position="43"/>
    </location>
</feature>
<feature type="strand" evidence="1">
    <location>
        <begin position="46"/>
        <end position="48"/>
    </location>
</feature>
<feature type="strand" evidence="1">
    <location>
        <begin position="52"/>
        <end position="54"/>
    </location>
</feature>
<feature type="strand" evidence="1">
    <location>
        <begin position="58"/>
        <end position="60"/>
    </location>
</feature>
<feature type="strand" evidence="1">
    <location>
        <begin position="63"/>
        <end position="73"/>
    </location>
</feature>
<feature type="helix" evidence="1">
    <location>
        <begin position="74"/>
        <end position="79"/>
    </location>
</feature>
<feature type="strand" evidence="1">
    <location>
        <begin position="83"/>
        <end position="89"/>
    </location>
</feature>
<feature type="strand" evidence="1">
    <location>
        <begin position="92"/>
        <end position="98"/>
    </location>
</feature>
<sequence>QPKSTPTLTVFPPSSEELKENKATLVCLISNFSPSGVTVAWKANGTPITQGVDTSNPTKEGNKFMASSFLHLTSDQWRSHNSFTCQVTHEGDTVEKSLSPAECL</sequence>
<evidence type="ECO:0007829" key="1">
    <source>
        <dbReference type="PDB" id="2QHR"/>
    </source>
</evidence>
<protein>
    <recommendedName>
        <fullName>Ig lambda-2 chain C region</fullName>
    </recommendedName>
</protein>
<gene>
    <name type="primary">Iglc2</name>
</gene>